<dbReference type="EMBL" id="CP000362">
    <property type="protein sequence ID" value="ABG32557.1"/>
    <property type="molecule type" value="Genomic_DNA"/>
</dbReference>
<dbReference type="RefSeq" id="WP_011569173.1">
    <property type="nucleotide sequence ID" value="NZ_FOOO01000002.1"/>
</dbReference>
<dbReference type="SMR" id="Q164N6"/>
<dbReference type="STRING" id="375451.RD1_3044"/>
<dbReference type="KEGG" id="rde:RD1_3044"/>
<dbReference type="eggNOG" id="COG0238">
    <property type="taxonomic scope" value="Bacteria"/>
</dbReference>
<dbReference type="HOGENOM" id="CLU_148710_2_3_5"/>
<dbReference type="OrthoDB" id="9812008at2"/>
<dbReference type="Proteomes" id="UP000007029">
    <property type="component" value="Chromosome"/>
</dbReference>
<dbReference type="GO" id="GO:0022627">
    <property type="term" value="C:cytosolic small ribosomal subunit"/>
    <property type="evidence" value="ECO:0007669"/>
    <property type="project" value="TreeGrafter"/>
</dbReference>
<dbReference type="GO" id="GO:0070181">
    <property type="term" value="F:small ribosomal subunit rRNA binding"/>
    <property type="evidence" value="ECO:0007669"/>
    <property type="project" value="TreeGrafter"/>
</dbReference>
<dbReference type="GO" id="GO:0003735">
    <property type="term" value="F:structural constituent of ribosome"/>
    <property type="evidence" value="ECO:0007669"/>
    <property type="project" value="InterPro"/>
</dbReference>
<dbReference type="GO" id="GO:0006412">
    <property type="term" value="P:translation"/>
    <property type="evidence" value="ECO:0007669"/>
    <property type="project" value="UniProtKB-UniRule"/>
</dbReference>
<dbReference type="Gene3D" id="4.10.640.10">
    <property type="entry name" value="Ribosomal protein S18"/>
    <property type="match status" value="1"/>
</dbReference>
<dbReference type="HAMAP" id="MF_00270">
    <property type="entry name" value="Ribosomal_bS18"/>
    <property type="match status" value="1"/>
</dbReference>
<dbReference type="InterPro" id="IPR001648">
    <property type="entry name" value="Ribosomal_bS18"/>
</dbReference>
<dbReference type="InterPro" id="IPR018275">
    <property type="entry name" value="Ribosomal_bS18_CS"/>
</dbReference>
<dbReference type="InterPro" id="IPR036870">
    <property type="entry name" value="Ribosomal_bS18_sf"/>
</dbReference>
<dbReference type="NCBIfam" id="TIGR00165">
    <property type="entry name" value="S18"/>
    <property type="match status" value="1"/>
</dbReference>
<dbReference type="PANTHER" id="PTHR13479">
    <property type="entry name" value="30S RIBOSOMAL PROTEIN S18"/>
    <property type="match status" value="1"/>
</dbReference>
<dbReference type="PANTHER" id="PTHR13479:SF40">
    <property type="entry name" value="SMALL RIBOSOMAL SUBUNIT PROTEIN BS18M"/>
    <property type="match status" value="1"/>
</dbReference>
<dbReference type="Pfam" id="PF01084">
    <property type="entry name" value="Ribosomal_S18"/>
    <property type="match status" value="1"/>
</dbReference>
<dbReference type="PRINTS" id="PR00974">
    <property type="entry name" value="RIBOSOMALS18"/>
</dbReference>
<dbReference type="SUPFAM" id="SSF46911">
    <property type="entry name" value="Ribosomal protein S18"/>
    <property type="match status" value="1"/>
</dbReference>
<dbReference type="PROSITE" id="PS00057">
    <property type="entry name" value="RIBOSOMAL_S18"/>
    <property type="match status" value="1"/>
</dbReference>
<sequence>MASKPFFRRRKVCPFSGDNAPKIDYKDTRLLQRYISERGKIVPSRITAVSAKKQRELARAIKRARFLALLPYAVK</sequence>
<name>RS18_ROSDO</name>
<reference key="1">
    <citation type="journal article" date="2007" name="J. Bacteriol.">
        <title>The complete genome sequence of Roseobacter denitrificans reveals a mixotrophic rather than photosynthetic metabolism.</title>
        <authorList>
            <person name="Swingley W.D."/>
            <person name="Sadekar S."/>
            <person name="Mastrian S.D."/>
            <person name="Matthies H.J."/>
            <person name="Hao J."/>
            <person name="Ramos H."/>
            <person name="Acharya C.R."/>
            <person name="Conrad A.L."/>
            <person name="Taylor H.L."/>
            <person name="Dejesa L.C."/>
            <person name="Shah M.K."/>
            <person name="O'Huallachain M.E."/>
            <person name="Lince M.T."/>
            <person name="Blankenship R.E."/>
            <person name="Beatty J.T."/>
            <person name="Touchman J.W."/>
        </authorList>
    </citation>
    <scope>NUCLEOTIDE SEQUENCE [LARGE SCALE GENOMIC DNA]</scope>
    <source>
        <strain>ATCC 33942 / OCh 114</strain>
    </source>
</reference>
<protein>
    <recommendedName>
        <fullName evidence="1">Small ribosomal subunit protein bS18</fullName>
    </recommendedName>
    <alternativeName>
        <fullName evidence="2">30S ribosomal protein S18</fullName>
    </alternativeName>
</protein>
<keyword id="KW-1185">Reference proteome</keyword>
<keyword id="KW-0687">Ribonucleoprotein</keyword>
<keyword id="KW-0689">Ribosomal protein</keyword>
<keyword id="KW-0694">RNA-binding</keyword>
<keyword id="KW-0699">rRNA-binding</keyword>
<organism>
    <name type="scientific">Roseobacter denitrificans (strain ATCC 33942 / OCh 114)</name>
    <name type="common">Erythrobacter sp. (strain OCh 114)</name>
    <name type="synonym">Roseobacter denitrificans</name>
    <dbReference type="NCBI Taxonomy" id="375451"/>
    <lineage>
        <taxon>Bacteria</taxon>
        <taxon>Pseudomonadati</taxon>
        <taxon>Pseudomonadota</taxon>
        <taxon>Alphaproteobacteria</taxon>
        <taxon>Rhodobacterales</taxon>
        <taxon>Roseobacteraceae</taxon>
        <taxon>Roseobacter</taxon>
    </lineage>
</organism>
<comment type="function">
    <text evidence="1">Binds as a heterodimer with protein bS6 to the central domain of the 16S rRNA, where it helps stabilize the platform of the 30S subunit.</text>
</comment>
<comment type="subunit">
    <text evidence="1">Part of the 30S ribosomal subunit. Forms a tight heterodimer with protein bS6.</text>
</comment>
<comment type="similarity">
    <text evidence="1">Belongs to the bacterial ribosomal protein bS18 family.</text>
</comment>
<accession>Q164N6</accession>
<proteinExistence type="inferred from homology"/>
<feature type="chain" id="PRO_1000003595" description="Small ribosomal subunit protein bS18">
    <location>
        <begin position="1"/>
        <end position="75"/>
    </location>
</feature>
<evidence type="ECO:0000255" key="1">
    <source>
        <dbReference type="HAMAP-Rule" id="MF_00270"/>
    </source>
</evidence>
<evidence type="ECO:0000305" key="2"/>
<gene>
    <name evidence="1" type="primary">rpsR</name>
    <name type="ordered locus">RD1_3044</name>
</gene>